<comment type="function">
    <text evidence="1">Nucleotidyltransferase involved in the post-translational modification of proteins. It can catalyze the addition of adenosine monophosphate (AMP) or uridine monophosphate (UMP) to a protein, resulting in modifications known as AMPylation and UMPylation.</text>
</comment>
<comment type="catalytic activity">
    <reaction evidence="1">
        <text>L-seryl-[protein] + ATP = 3-O-(5'-adenylyl)-L-seryl-[protein] + diphosphate</text>
        <dbReference type="Rhea" id="RHEA:58120"/>
        <dbReference type="Rhea" id="RHEA-COMP:9863"/>
        <dbReference type="Rhea" id="RHEA-COMP:15073"/>
        <dbReference type="ChEBI" id="CHEBI:29999"/>
        <dbReference type="ChEBI" id="CHEBI:30616"/>
        <dbReference type="ChEBI" id="CHEBI:33019"/>
        <dbReference type="ChEBI" id="CHEBI:142516"/>
        <dbReference type="EC" id="2.7.7.108"/>
    </reaction>
</comment>
<comment type="catalytic activity">
    <reaction evidence="1">
        <text>L-threonyl-[protein] + ATP = 3-O-(5'-adenylyl)-L-threonyl-[protein] + diphosphate</text>
        <dbReference type="Rhea" id="RHEA:54292"/>
        <dbReference type="Rhea" id="RHEA-COMP:11060"/>
        <dbReference type="Rhea" id="RHEA-COMP:13847"/>
        <dbReference type="ChEBI" id="CHEBI:30013"/>
        <dbReference type="ChEBI" id="CHEBI:30616"/>
        <dbReference type="ChEBI" id="CHEBI:33019"/>
        <dbReference type="ChEBI" id="CHEBI:138113"/>
        <dbReference type="EC" id="2.7.7.108"/>
    </reaction>
</comment>
<comment type="catalytic activity">
    <reaction evidence="1">
        <text>L-tyrosyl-[protein] + ATP = O-(5'-adenylyl)-L-tyrosyl-[protein] + diphosphate</text>
        <dbReference type="Rhea" id="RHEA:54288"/>
        <dbReference type="Rhea" id="RHEA-COMP:10136"/>
        <dbReference type="Rhea" id="RHEA-COMP:13846"/>
        <dbReference type="ChEBI" id="CHEBI:30616"/>
        <dbReference type="ChEBI" id="CHEBI:33019"/>
        <dbReference type="ChEBI" id="CHEBI:46858"/>
        <dbReference type="ChEBI" id="CHEBI:83624"/>
        <dbReference type="EC" id="2.7.7.108"/>
    </reaction>
</comment>
<comment type="catalytic activity">
    <reaction evidence="1">
        <text>L-histidyl-[protein] + UTP = N(tele)-(5'-uridylyl)-L-histidyl-[protein] + diphosphate</text>
        <dbReference type="Rhea" id="RHEA:83891"/>
        <dbReference type="Rhea" id="RHEA-COMP:9745"/>
        <dbReference type="Rhea" id="RHEA-COMP:20239"/>
        <dbReference type="ChEBI" id="CHEBI:29979"/>
        <dbReference type="ChEBI" id="CHEBI:33019"/>
        <dbReference type="ChEBI" id="CHEBI:46398"/>
        <dbReference type="ChEBI" id="CHEBI:233474"/>
    </reaction>
</comment>
<comment type="catalytic activity">
    <reaction evidence="1">
        <text>L-seryl-[protein] + UTP = O-(5'-uridylyl)-L-seryl-[protein] + diphosphate</text>
        <dbReference type="Rhea" id="RHEA:64604"/>
        <dbReference type="Rhea" id="RHEA-COMP:9863"/>
        <dbReference type="Rhea" id="RHEA-COMP:16635"/>
        <dbReference type="ChEBI" id="CHEBI:29999"/>
        <dbReference type="ChEBI" id="CHEBI:33019"/>
        <dbReference type="ChEBI" id="CHEBI:46398"/>
        <dbReference type="ChEBI" id="CHEBI:156051"/>
    </reaction>
</comment>
<comment type="catalytic activity">
    <reaction evidence="1">
        <text>L-tyrosyl-[protein] + UTP = O-(5'-uridylyl)-L-tyrosyl-[protein] + diphosphate</text>
        <dbReference type="Rhea" id="RHEA:83887"/>
        <dbReference type="Rhea" id="RHEA-COMP:10136"/>
        <dbReference type="Rhea" id="RHEA-COMP:20238"/>
        <dbReference type="ChEBI" id="CHEBI:33019"/>
        <dbReference type="ChEBI" id="CHEBI:46398"/>
        <dbReference type="ChEBI" id="CHEBI:46858"/>
        <dbReference type="ChEBI" id="CHEBI:90602"/>
    </reaction>
</comment>
<comment type="cofactor">
    <cofactor evidence="1">
        <name>Mg(2+)</name>
        <dbReference type="ChEBI" id="CHEBI:18420"/>
    </cofactor>
    <cofactor evidence="1">
        <name>Mn(2+)</name>
        <dbReference type="ChEBI" id="CHEBI:29035"/>
    </cofactor>
</comment>
<comment type="similarity">
    <text evidence="1">Belongs to the SELO family.</text>
</comment>
<protein>
    <recommendedName>
        <fullName evidence="1">Protein nucleotidyltransferase YdiU</fullName>
        <ecNumber evidence="1">2.7.7.-</ecNumber>
    </recommendedName>
    <alternativeName>
        <fullName evidence="1">Protein adenylyltransferase YdiU</fullName>
        <ecNumber evidence="1">2.7.7.108</ecNumber>
    </alternativeName>
    <alternativeName>
        <fullName evidence="1">Protein uridylyltransferase YdiU</fullName>
        <ecNumber evidence="1">2.7.7.-</ecNumber>
    </alternativeName>
</protein>
<feature type="chain" id="PRO_1000045236" description="Protein nucleotidyltransferase YdiU">
    <location>
        <begin position="1"/>
        <end position="475"/>
    </location>
</feature>
<feature type="active site" description="Proton acceptor" evidence="1">
    <location>
        <position position="240"/>
    </location>
</feature>
<feature type="binding site" evidence="1">
    <location>
        <position position="82"/>
    </location>
    <ligand>
        <name>ATP</name>
        <dbReference type="ChEBI" id="CHEBI:30616"/>
    </ligand>
</feature>
<feature type="binding site" evidence="1">
    <location>
        <position position="84"/>
    </location>
    <ligand>
        <name>ATP</name>
        <dbReference type="ChEBI" id="CHEBI:30616"/>
    </ligand>
</feature>
<feature type="binding site" evidence="1">
    <location>
        <position position="85"/>
    </location>
    <ligand>
        <name>ATP</name>
        <dbReference type="ChEBI" id="CHEBI:30616"/>
    </ligand>
</feature>
<feature type="binding site" evidence="1">
    <location>
        <position position="105"/>
    </location>
    <ligand>
        <name>ATP</name>
        <dbReference type="ChEBI" id="CHEBI:30616"/>
    </ligand>
</feature>
<feature type="binding site" evidence="1">
    <location>
        <position position="117"/>
    </location>
    <ligand>
        <name>ATP</name>
        <dbReference type="ChEBI" id="CHEBI:30616"/>
    </ligand>
</feature>
<feature type="binding site" evidence="1">
    <location>
        <position position="118"/>
    </location>
    <ligand>
        <name>ATP</name>
        <dbReference type="ChEBI" id="CHEBI:30616"/>
    </ligand>
</feature>
<feature type="binding site" evidence="1">
    <location>
        <position position="168"/>
    </location>
    <ligand>
        <name>ATP</name>
        <dbReference type="ChEBI" id="CHEBI:30616"/>
    </ligand>
</feature>
<feature type="binding site" evidence="1">
    <location>
        <position position="175"/>
    </location>
    <ligand>
        <name>ATP</name>
        <dbReference type="ChEBI" id="CHEBI:30616"/>
    </ligand>
</feature>
<feature type="binding site" evidence="1">
    <location>
        <position position="241"/>
    </location>
    <ligand>
        <name>Mg(2+)</name>
        <dbReference type="ChEBI" id="CHEBI:18420"/>
    </ligand>
</feature>
<feature type="binding site" evidence="1">
    <location>
        <position position="250"/>
    </location>
    <ligand>
        <name>ATP</name>
        <dbReference type="ChEBI" id="CHEBI:30616"/>
    </ligand>
</feature>
<feature type="binding site" evidence="1">
    <location>
        <position position="250"/>
    </location>
    <ligand>
        <name>Mg(2+)</name>
        <dbReference type="ChEBI" id="CHEBI:18420"/>
    </ligand>
</feature>
<gene>
    <name evidence="1" type="primary">ydiU</name>
    <name evidence="1" type="synonym">selO</name>
    <name type="ordered locus">ASA_0185</name>
</gene>
<proteinExistence type="inferred from homology"/>
<dbReference type="EC" id="2.7.7.-" evidence="1"/>
<dbReference type="EC" id="2.7.7.108" evidence="1"/>
<dbReference type="EMBL" id="CP000644">
    <property type="protein sequence ID" value="ABO88380.1"/>
    <property type="molecule type" value="Genomic_DNA"/>
</dbReference>
<dbReference type="RefSeq" id="WP_005318354.1">
    <property type="nucleotide sequence ID" value="NC_009348.1"/>
</dbReference>
<dbReference type="SMR" id="A4SHK8"/>
<dbReference type="STRING" id="29491.GCA_000820065_01258"/>
<dbReference type="KEGG" id="asa:ASA_0185"/>
<dbReference type="PATRIC" id="fig|382245.13.peg.193"/>
<dbReference type="eggNOG" id="COG0397">
    <property type="taxonomic scope" value="Bacteria"/>
</dbReference>
<dbReference type="HOGENOM" id="CLU_010245_4_0_6"/>
<dbReference type="Proteomes" id="UP000000225">
    <property type="component" value="Chromosome"/>
</dbReference>
<dbReference type="GO" id="GO:0070733">
    <property type="term" value="F:AMPylase activity"/>
    <property type="evidence" value="ECO:0007669"/>
    <property type="project" value="RHEA"/>
</dbReference>
<dbReference type="GO" id="GO:0005524">
    <property type="term" value="F:ATP binding"/>
    <property type="evidence" value="ECO:0007669"/>
    <property type="project" value="UniProtKB-UniRule"/>
</dbReference>
<dbReference type="GO" id="GO:0000287">
    <property type="term" value="F:magnesium ion binding"/>
    <property type="evidence" value="ECO:0007669"/>
    <property type="project" value="UniProtKB-UniRule"/>
</dbReference>
<dbReference type="HAMAP" id="MF_00692">
    <property type="entry name" value="YdiU_SelO"/>
    <property type="match status" value="1"/>
</dbReference>
<dbReference type="InterPro" id="IPR003846">
    <property type="entry name" value="SelO"/>
</dbReference>
<dbReference type="NCBIfam" id="NF000658">
    <property type="entry name" value="PRK00029.1"/>
    <property type="match status" value="1"/>
</dbReference>
<dbReference type="PANTHER" id="PTHR32057">
    <property type="entry name" value="PROTEIN ADENYLYLTRANSFERASE SELO, MITOCHONDRIAL"/>
    <property type="match status" value="1"/>
</dbReference>
<dbReference type="PANTHER" id="PTHR32057:SF14">
    <property type="entry name" value="PROTEIN ADENYLYLTRANSFERASE SELO, MITOCHONDRIAL"/>
    <property type="match status" value="1"/>
</dbReference>
<dbReference type="Pfam" id="PF02696">
    <property type="entry name" value="SelO"/>
    <property type="match status" value="1"/>
</dbReference>
<sequence>MKLINTFATELPWACEPVVPQPLREPRLLHLNRGLLAELGLDGVSDTDWLACCGLGQPLPGMQPVAQVYAGHQFGGYSPRLGDGRALLLGEQLATDGQRWDLHLKGAGKTPFSRFGDGRAVLRSSIREYLASEALHALGIPTTRALVLVGSKEPVYREQEETGATVLRTAPSHLRFGHIEYFAWSGQGEKIPALIDYLLRYHFPELENGAELFAEVVRRTARLIAKWQAAGFCHGVLNTDNMSLLGLTLDYGPYGFIDAYVPDFVCNHSDPDGRYALDQQPAVGYWNLQKLAQALAGHVDGDALATSLAQYEHQLMLHYSELMRAKLGLTQWEEEDPALFRQLFQLLASQGVDYHLFLRRLGEVTGTGEWPASLLALLPDPDLWQGWLELYRVRLTREGGEDAVRKAQMDAINPKYVLRNALAQQAIDAAEGGDMTQFERLLAALQQPYDEQPEYADLATPVPQWYCGGELSCSS</sequence>
<reference key="1">
    <citation type="journal article" date="2008" name="BMC Genomics">
        <title>The genome of Aeromonas salmonicida subsp. salmonicida A449: insights into the evolution of a fish pathogen.</title>
        <authorList>
            <person name="Reith M.E."/>
            <person name="Singh R.K."/>
            <person name="Curtis B."/>
            <person name="Boyd J.M."/>
            <person name="Bouevitch A."/>
            <person name="Kimball J."/>
            <person name="Munholland J."/>
            <person name="Murphy C."/>
            <person name="Sarty D."/>
            <person name="Williams J."/>
            <person name="Nash J.H."/>
            <person name="Johnson S.C."/>
            <person name="Brown L.L."/>
        </authorList>
    </citation>
    <scope>NUCLEOTIDE SEQUENCE [LARGE SCALE GENOMIC DNA]</scope>
    <source>
        <strain>A449</strain>
    </source>
</reference>
<name>SELO_AERS4</name>
<keyword id="KW-0067">ATP-binding</keyword>
<keyword id="KW-0460">Magnesium</keyword>
<keyword id="KW-0464">Manganese</keyword>
<keyword id="KW-0479">Metal-binding</keyword>
<keyword id="KW-0547">Nucleotide-binding</keyword>
<keyword id="KW-0548">Nucleotidyltransferase</keyword>
<keyword id="KW-0808">Transferase</keyword>
<accession>A4SHK8</accession>
<evidence type="ECO:0000255" key="1">
    <source>
        <dbReference type="HAMAP-Rule" id="MF_00692"/>
    </source>
</evidence>
<organism>
    <name type="scientific">Aeromonas salmonicida (strain A449)</name>
    <dbReference type="NCBI Taxonomy" id="382245"/>
    <lineage>
        <taxon>Bacteria</taxon>
        <taxon>Pseudomonadati</taxon>
        <taxon>Pseudomonadota</taxon>
        <taxon>Gammaproteobacteria</taxon>
        <taxon>Aeromonadales</taxon>
        <taxon>Aeromonadaceae</taxon>
        <taxon>Aeromonas</taxon>
    </lineage>
</organism>